<comment type="function">
    <text evidence="1">Methyltransferase involved in ribosomal biogenesis. Specifically catalyzes the N1-methylation of the pseudouridine corresponding to position 914 in M.jannaschii 16S rRNA.</text>
</comment>
<comment type="catalytic activity">
    <reaction evidence="1">
        <text>a pseudouridine in rRNA + S-adenosyl-L-methionine = an N(1)-methylpseudouridine in rRNA + S-adenosyl-L-homocysteine + H(+)</text>
        <dbReference type="Rhea" id="RHEA:46696"/>
        <dbReference type="Rhea" id="RHEA-COMP:11634"/>
        <dbReference type="Rhea" id="RHEA-COMP:13933"/>
        <dbReference type="ChEBI" id="CHEBI:15378"/>
        <dbReference type="ChEBI" id="CHEBI:57856"/>
        <dbReference type="ChEBI" id="CHEBI:59789"/>
        <dbReference type="ChEBI" id="CHEBI:65314"/>
        <dbReference type="ChEBI" id="CHEBI:74890"/>
    </reaction>
</comment>
<comment type="subunit">
    <text evidence="1">Homodimer.</text>
</comment>
<comment type="similarity">
    <text evidence="2">Belongs to the class IV-like SAM-binding methyltransferase superfamily. RNA methyltransferase NEP1 family.</text>
</comment>
<evidence type="ECO:0000255" key="1">
    <source>
        <dbReference type="HAMAP-Rule" id="MF_00554"/>
    </source>
</evidence>
<evidence type="ECO:0000305" key="2"/>
<reference key="1">
    <citation type="submission" date="2007-04" db="EMBL/GenBank/DDBJ databases">
        <title>Complete sequence of Pyrobaculum arsenaticum DSM 13514.</title>
        <authorList>
            <consortium name="US DOE Joint Genome Institute"/>
            <person name="Copeland A."/>
            <person name="Lucas S."/>
            <person name="Lapidus A."/>
            <person name="Barry K."/>
            <person name="Glavina del Rio T."/>
            <person name="Dalin E."/>
            <person name="Tice H."/>
            <person name="Pitluck S."/>
            <person name="Chain P."/>
            <person name="Malfatti S."/>
            <person name="Shin M."/>
            <person name="Vergez L."/>
            <person name="Schmutz J."/>
            <person name="Larimer F."/>
            <person name="Land M."/>
            <person name="Hauser L."/>
            <person name="Kyrpides N."/>
            <person name="Mikhailova N."/>
            <person name="Cozen A.E."/>
            <person name="Fitz-Gibbon S.T."/>
            <person name="House C.H."/>
            <person name="Saltikov C."/>
            <person name="Lowe T.M."/>
            <person name="Richardson P."/>
        </authorList>
    </citation>
    <scope>NUCLEOTIDE SEQUENCE [LARGE SCALE GENOMIC DNA]</scope>
    <source>
        <strain>ATCC 700994 / DSM 13514 / JCM 11321 / PZ6</strain>
    </source>
</reference>
<keyword id="KW-0489">Methyltransferase</keyword>
<keyword id="KW-0690">Ribosome biogenesis</keyword>
<keyword id="KW-0694">RNA-binding</keyword>
<keyword id="KW-0698">rRNA processing</keyword>
<keyword id="KW-0699">rRNA-binding</keyword>
<keyword id="KW-0949">S-adenosyl-L-methionine</keyword>
<keyword id="KW-0808">Transferase</keyword>
<organism>
    <name type="scientific">Pyrobaculum arsenaticum (strain DSM 13514 / JCM 11321 / PZ6)</name>
    <dbReference type="NCBI Taxonomy" id="340102"/>
    <lineage>
        <taxon>Archaea</taxon>
        <taxon>Thermoproteota</taxon>
        <taxon>Thermoprotei</taxon>
        <taxon>Thermoproteales</taxon>
        <taxon>Thermoproteaceae</taxon>
        <taxon>Pyrobaculum</taxon>
    </lineage>
</organism>
<gene>
    <name evidence="1" type="primary">nep1</name>
    <name type="ordered locus">Pars_2054</name>
</gene>
<sequence length="221" mass="24304">MILVLAESALELVPREIWSHPAVVADARRRGKKPGGILLDRSRHHPAMAVLLDSRRRGRPDIVHQALLVFQYSLLAARGLGRMYIHTLGDYVISVDPSTRVPKNYNNFVSLVEQLFATGRVPPEGRPLMEIRRQGLRDLLTELGGRWVVMHEAGLRIPLVQLGKEVLDSVVVIGGFPHGDFNNKWVLEEAAARYSLGEVAMDAAQVACRVVAAAEAAAGLL</sequence>
<proteinExistence type="inferred from homology"/>
<name>NEP1_PYRAR</name>
<accession>A4WMI3</accession>
<feature type="chain" id="PRO_1000017928" description="Ribosomal RNA small subunit methyltransferase Nep1">
    <location>
        <begin position="1"/>
        <end position="221"/>
    </location>
</feature>
<feature type="binding site" evidence="1">
    <location>
        <position position="174"/>
    </location>
    <ligand>
        <name>S-adenosyl-L-methionine</name>
        <dbReference type="ChEBI" id="CHEBI:59789"/>
    </ligand>
</feature>
<feature type="binding site" evidence="1">
    <location>
        <position position="179"/>
    </location>
    <ligand>
        <name>S-adenosyl-L-methionine</name>
        <dbReference type="ChEBI" id="CHEBI:59789"/>
    </ligand>
</feature>
<feature type="binding site" evidence="1">
    <location>
        <begin position="196"/>
        <end position="201"/>
    </location>
    <ligand>
        <name>S-adenosyl-L-methionine</name>
        <dbReference type="ChEBI" id="CHEBI:59789"/>
    </ligand>
</feature>
<feature type="site" description="Interaction with substrate rRNA" evidence="1">
    <location>
        <position position="59"/>
    </location>
</feature>
<feature type="site" description="Stabilizes Arg-59" evidence="1">
    <location>
        <position position="61"/>
    </location>
</feature>
<feature type="site" description="Interaction with substrate rRNA" evidence="1">
    <location>
        <position position="100"/>
    </location>
</feature>
<feature type="site" description="Interaction with substrate rRNA" evidence="1">
    <location>
        <position position="103"/>
    </location>
</feature>
<feature type="site" description="Interaction with substrate rRNA" evidence="1">
    <location>
        <position position="107"/>
    </location>
</feature>
<protein>
    <recommendedName>
        <fullName evidence="1">Ribosomal RNA small subunit methyltransferase Nep1</fullName>
        <ecNumber evidence="1">2.1.1.-</ecNumber>
    </recommendedName>
    <alternativeName>
        <fullName evidence="1">16S rRNA (pseudouridine-N1-)-methyltransferase Nep1</fullName>
    </alternativeName>
</protein>
<dbReference type="EC" id="2.1.1.-" evidence="1"/>
<dbReference type="EMBL" id="CP000660">
    <property type="protein sequence ID" value="ABP51600.1"/>
    <property type="molecule type" value="Genomic_DNA"/>
</dbReference>
<dbReference type="RefSeq" id="WP_011901503.1">
    <property type="nucleotide sequence ID" value="NC_009376.1"/>
</dbReference>
<dbReference type="SMR" id="A4WMI3"/>
<dbReference type="STRING" id="340102.Pars_2054"/>
<dbReference type="GeneID" id="5056310"/>
<dbReference type="KEGG" id="pas:Pars_2054"/>
<dbReference type="HOGENOM" id="CLU_055846_1_3_2"/>
<dbReference type="OrthoDB" id="7612at2157"/>
<dbReference type="PhylomeDB" id="A4WMI3"/>
<dbReference type="Proteomes" id="UP000001567">
    <property type="component" value="Chromosome"/>
</dbReference>
<dbReference type="GO" id="GO:0070037">
    <property type="term" value="F:rRNA (pseudouridine) methyltransferase activity"/>
    <property type="evidence" value="ECO:0007669"/>
    <property type="project" value="UniProtKB-UniRule"/>
</dbReference>
<dbReference type="GO" id="GO:0019843">
    <property type="term" value="F:rRNA binding"/>
    <property type="evidence" value="ECO:0007669"/>
    <property type="project" value="UniProtKB-UniRule"/>
</dbReference>
<dbReference type="GO" id="GO:0070475">
    <property type="term" value="P:rRNA base methylation"/>
    <property type="evidence" value="ECO:0007669"/>
    <property type="project" value="InterPro"/>
</dbReference>
<dbReference type="CDD" id="cd18088">
    <property type="entry name" value="Nep1-like"/>
    <property type="match status" value="1"/>
</dbReference>
<dbReference type="FunFam" id="3.40.1280.10:FF:000042">
    <property type="entry name" value="Ribosomal RNA small subunit methyltransferase Nep1"/>
    <property type="match status" value="1"/>
</dbReference>
<dbReference type="Gene3D" id="3.40.1280.10">
    <property type="match status" value="1"/>
</dbReference>
<dbReference type="HAMAP" id="MF_00554">
    <property type="entry name" value="NEP1"/>
    <property type="match status" value="1"/>
</dbReference>
<dbReference type="InterPro" id="IPR029028">
    <property type="entry name" value="Alpha/beta_knot_MTases"/>
</dbReference>
<dbReference type="InterPro" id="IPR005304">
    <property type="entry name" value="Rbsml_bgen_MeTrfase_EMG1/NEP1"/>
</dbReference>
<dbReference type="InterPro" id="IPR023503">
    <property type="entry name" value="Ribosome_NEP1_arc"/>
</dbReference>
<dbReference type="InterPro" id="IPR029026">
    <property type="entry name" value="tRNA_m1G_MTases_N"/>
</dbReference>
<dbReference type="PANTHER" id="PTHR12636">
    <property type="entry name" value="NEP1/MRA1"/>
    <property type="match status" value="1"/>
</dbReference>
<dbReference type="PANTHER" id="PTHR12636:SF5">
    <property type="entry name" value="RIBOSOMAL RNA SMALL SUBUNIT METHYLTRANSFERASE NEP1"/>
    <property type="match status" value="1"/>
</dbReference>
<dbReference type="Pfam" id="PF03587">
    <property type="entry name" value="EMG1"/>
    <property type="match status" value="1"/>
</dbReference>
<dbReference type="SUPFAM" id="SSF75217">
    <property type="entry name" value="alpha/beta knot"/>
    <property type="match status" value="1"/>
</dbReference>